<organism>
    <name type="scientific">Vibrio parahaemolyticus serotype O3:K6 (strain RIMD 2210633)</name>
    <dbReference type="NCBI Taxonomy" id="223926"/>
    <lineage>
        <taxon>Bacteria</taxon>
        <taxon>Pseudomonadati</taxon>
        <taxon>Pseudomonadota</taxon>
        <taxon>Gammaproteobacteria</taxon>
        <taxon>Vibrionales</taxon>
        <taxon>Vibrionaceae</taxon>
        <taxon>Vibrio</taxon>
    </lineage>
</organism>
<gene>
    <name evidence="1" type="primary">tdh</name>
    <name type="ordered locus">VPA1509</name>
</gene>
<dbReference type="EC" id="1.1.1.103" evidence="1"/>
<dbReference type="EMBL" id="BA000032">
    <property type="protein sequence ID" value="BAC62852.1"/>
    <property type="molecule type" value="Genomic_DNA"/>
</dbReference>
<dbReference type="RefSeq" id="NP_801019.1">
    <property type="nucleotide sequence ID" value="NC_004605.1"/>
</dbReference>
<dbReference type="RefSeq" id="WP_005478141.1">
    <property type="nucleotide sequence ID" value="NC_004605.1"/>
</dbReference>
<dbReference type="SMR" id="P59410"/>
<dbReference type="GeneID" id="1192205"/>
<dbReference type="KEGG" id="vpa:VPA1509"/>
<dbReference type="PATRIC" id="fig|223926.6.peg.4433"/>
<dbReference type="eggNOG" id="COG1063">
    <property type="taxonomic scope" value="Bacteria"/>
</dbReference>
<dbReference type="HOGENOM" id="CLU_026673_11_0_6"/>
<dbReference type="UniPathway" id="UPA00046">
    <property type="reaction ID" value="UER00505"/>
</dbReference>
<dbReference type="Proteomes" id="UP000002493">
    <property type="component" value="Chromosome 2"/>
</dbReference>
<dbReference type="GO" id="GO:0005737">
    <property type="term" value="C:cytoplasm"/>
    <property type="evidence" value="ECO:0007669"/>
    <property type="project" value="UniProtKB-SubCell"/>
</dbReference>
<dbReference type="GO" id="GO:0008743">
    <property type="term" value="F:L-threonine 3-dehydrogenase activity"/>
    <property type="evidence" value="ECO:0007669"/>
    <property type="project" value="UniProtKB-UniRule"/>
</dbReference>
<dbReference type="GO" id="GO:0008270">
    <property type="term" value="F:zinc ion binding"/>
    <property type="evidence" value="ECO:0007669"/>
    <property type="project" value="UniProtKB-UniRule"/>
</dbReference>
<dbReference type="GO" id="GO:0019518">
    <property type="term" value="P:L-threonine catabolic process to glycine"/>
    <property type="evidence" value="ECO:0007669"/>
    <property type="project" value="UniProtKB-UniPathway"/>
</dbReference>
<dbReference type="FunFam" id="3.40.50.720:FF:000059">
    <property type="entry name" value="L-threonine 3-dehydrogenase"/>
    <property type="match status" value="1"/>
</dbReference>
<dbReference type="Gene3D" id="3.90.180.10">
    <property type="entry name" value="Medium-chain alcohol dehydrogenases, catalytic domain"/>
    <property type="match status" value="1"/>
</dbReference>
<dbReference type="Gene3D" id="3.40.50.720">
    <property type="entry name" value="NAD(P)-binding Rossmann-like Domain"/>
    <property type="match status" value="1"/>
</dbReference>
<dbReference type="HAMAP" id="MF_00627">
    <property type="entry name" value="Thr_dehydrog"/>
    <property type="match status" value="1"/>
</dbReference>
<dbReference type="InterPro" id="IPR013149">
    <property type="entry name" value="ADH-like_C"/>
</dbReference>
<dbReference type="InterPro" id="IPR013154">
    <property type="entry name" value="ADH-like_N"/>
</dbReference>
<dbReference type="InterPro" id="IPR002328">
    <property type="entry name" value="ADH_Zn_CS"/>
</dbReference>
<dbReference type="InterPro" id="IPR011032">
    <property type="entry name" value="GroES-like_sf"/>
</dbReference>
<dbReference type="InterPro" id="IPR004627">
    <property type="entry name" value="L-Threonine_3-DHase"/>
</dbReference>
<dbReference type="InterPro" id="IPR036291">
    <property type="entry name" value="NAD(P)-bd_dom_sf"/>
</dbReference>
<dbReference type="InterPro" id="IPR020843">
    <property type="entry name" value="PKS_ER"/>
</dbReference>
<dbReference type="InterPro" id="IPR050129">
    <property type="entry name" value="Zn_alcohol_dh"/>
</dbReference>
<dbReference type="NCBIfam" id="NF003808">
    <property type="entry name" value="PRK05396.1"/>
    <property type="match status" value="1"/>
</dbReference>
<dbReference type="NCBIfam" id="TIGR00692">
    <property type="entry name" value="tdh"/>
    <property type="match status" value="1"/>
</dbReference>
<dbReference type="PANTHER" id="PTHR43401">
    <property type="entry name" value="L-THREONINE 3-DEHYDROGENASE"/>
    <property type="match status" value="1"/>
</dbReference>
<dbReference type="PANTHER" id="PTHR43401:SF2">
    <property type="entry name" value="L-THREONINE 3-DEHYDROGENASE"/>
    <property type="match status" value="1"/>
</dbReference>
<dbReference type="Pfam" id="PF08240">
    <property type="entry name" value="ADH_N"/>
    <property type="match status" value="1"/>
</dbReference>
<dbReference type="Pfam" id="PF00107">
    <property type="entry name" value="ADH_zinc_N"/>
    <property type="match status" value="1"/>
</dbReference>
<dbReference type="SMART" id="SM00829">
    <property type="entry name" value="PKS_ER"/>
    <property type="match status" value="1"/>
</dbReference>
<dbReference type="SUPFAM" id="SSF50129">
    <property type="entry name" value="GroES-like"/>
    <property type="match status" value="1"/>
</dbReference>
<dbReference type="SUPFAM" id="SSF51735">
    <property type="entry name" value="NAD(P)-binding Rossmann-fold domains"/>
    <property type="match status" value="1"/>
</dbReference>
<dbReference type="PROSITE" id="PS00059">
    <property type="entry name" value="ADH_ZINC"/>
    <property type="match status" value="1"/>
</dbReference>
<reference key="1">
    <citation type="journal article" date="2003" name="Lancet">
        <title>Genome sequence of Vibrio parahaemolyticus: a pathogenic mechanism distinct from that of V. cholerae.</title>
        <authorList>
            <person name="Makino K."/>
            <person name="Oshima K."/>
            <person name="Kurokawa K."/>
            <person name="Yokoyama K."/>
            <person name="Uda T."/>
            <person name="Tagomori K."/>
            <person name="Iijima Y."/>
            <person name="Najima M."/>
            <person name="Nakano M."/>
            <person name="Yamashita A."/>
            <person name="Kubota Y."/>
            <person name="Kimura S."/>
            <person name="Yasunaga T."/>
            <person name="Honda T."/>
            <person name="Shinagawa H."/>
            <person name="Hattori M."/>
            <person name="Iida T."/>
        </authorList>
    </citation>
    <scope>NUCLEOTIDE SEQUENCE [LARGE SCALE GENOMIC DNA]</scope>
    <source>
        <strain>RIMD 2210633</strain>
    </source>
</reference>
<protein>
    <recommendedName>
        <fullName evidence="1">L-threonine 3-dehydrogenase</fullName>
        <shortName evidence="1">TDH</shortName>
        <ecNumber evidence="1">1.1.1.103</ecNumber>
    </recommendedName>
</protein>
<keyword id="KW-0963">Cytoplasm</keyword>
<keyword id="KW-0479">Metal-binding</keyword>
<keyword id="KW-0520">NAD</keyword>
<keyword id="KW-0560">Oxidoreductase</keyword>
<keyword id="KW-0862">Zinc</keyword>
<feature type="chain" id="PRO_0000160867" description="L-threonine 3-dehydrogenase">
    <location>
        <begin position="1"/>
        <end position="343"/>
    </location>
</feature>
<feature type="active site" description="Charge relay system" evidence="1">
    <location>
        <position position="42"/>
    </location>
</feature>
<feature type="active site" description="Charge relay system" evidence="1">
    <location>
        <position position="45"/>
    </location>
</feature>
<feature type="binding site" evidence="1">
    <location>
        <position position="40"/>
    </location>
    <ligand>
        <name>Zn(2+)</name>
        <dbReference type="ChEBI" id="CHEBI:29105"/>
        <label>1</label>
        <note>catalytic</note>
    </ligand>
</feature>
<feature type="binding site" evidence="1">
    <location>
        <position position="65"/>
    </location>
    <ligand>
        <name>Zn(2+)</name>
        <dbReference type="ChEBI" id="CHEBI:29105"/>
        <label>1</label>
        <note>catalytic</note>
    </ligand>
</feature>
<feature type="binding site" evidence="1">
    <location>
        <position position="66"/>
    </location>
    <ligand>
        <name>Zn(2+)</name>
        <dbReference type="ChEBI" id="CHEBI:29105"/>
        <label>1</label>
        <note>catalytic</note>
    </ligand>
</feature>
<feature type="binding site" evidence="1">
    <location>
        <position position="95"/>
    </location>
    <ligand>
        <name>Zn(2+)</name>
        <dbReference type="ChEBI" id="CHEBI:29105"/>
        <label>2</label>
    </ligand>
</feature>
<feature type="binding site" evidence="1">
    <location>
        <position position="98"/>
    </location>
    <ligand>
        <name>Zn(2+)</name>
        <dbReference type="ChEBI" id="CHEBI:29105"/>
        <label>2</label>
    </ligand>
</feature>
<feature type="binding site" evidence="1">
    <location>
        <position position="101"/>
    </location>
    <ligand>
        <name>Zn(2+)</name>
        <dbReference type="ChEBI" id="CHEBI:29105"/>
        <label>2</label>
    </ligand>
</feature>
<feature type="binding site" evidence="1">
    <location>
        <position position="109"/>
    </location>
    <ligand>
        <name>Zn(2+)</name>
        <dbReference type="ChEBI" id="CHEBI:29105"/>
        <label>2</label>
    </ligand>
</feature>
<feature type="binding site" evidence="1">
    <location>
        <position position="177"/>
    </location>
    <ligand>
        <name>NAD(+)</name>
        <dbReference type="ChEBI" id="CHEBI:57540"/>
    </ligand>
</feature>
<feature type="binding site" evidence="1">
    <location>
        <position position="197"/>
    </location>
    <ligand>
        <name>NAD(+)</name>
        <dbReference type="ChEBI" id="CHEBI:57540"/>
    </ligand>
</feature>
<feature type="binding site" evidence="1">
    <location>
        <position position="202"/>
    </location>
    <ligand>
        <name>NAD(+)</name>
        <dbReference type="ChEBI" id="CHEBI:57540"/>
    </ligand>
</feature>
<feature type="binding site" evidence="1">
    <location>
        <begin position="264"/>
        <end position="266"/>
    </location>
    <ligand>
        <name>NAD(+)</name>
        <dbReference type="ChEBI" id="CHEBI:57540"/>
    </ligand>
</feature>
<feature type="binding site" evidence="1">
    <location>
        <begin position="288"/>
        <end position="289"/>
    </location>
    <ligand>
        <name>NAD(+)</name>
        <dbReference type="ChEBI" id="CHEBI:57540"/>
    </ligand>
</feature>
<feature type="site" description="Important for catalytic activity for the proton relay mechanism but does not participate directly in the coordination of zinc atom" evidence="1">
    <location>
        <position position="150"/>
    </location>
</feature>
<accession>P59410</accession>
<comment type="function">
    <text evidence="1">Catalyzes the NAD(+)-dependent oxidation of L-threonine to 2-amino-3-ketobutyrate.</text>
</comment>
<comment type="catalytic activity">
    <reaction evidence="1">
        <text>L-threonine + NAD(+) = (2S)-2-amino-3-oxobutanoate + NADH + H(+)</text>
        <dbReference type="Rhea" id="RHEA:13161"/>
        <dbReference type="ChEBI" id="CHEBI:15378"/>
        <dbReference type="ChEBI" id="CHEBI:57540"/>
        <dbReference type="ChEBI" id="CHEBI:57926"/>
        <dbReference type="ChEBI" id="CHEBI:57945"/>
        <dbReference type="ChEBI" id="CHEBI:78948"/>
        <dbReference type="EC" id="1.1.1.103"/>
    </reaction>
</comment>
<comment type="cofactor">
    <cofactor evidence="1">
        <name>Zn(2+)</name>
        <dbReference type="ChEBI" id="CHEBI:29105"/>
    </cofactor>
    <text evidence="1">Binds 2 Zn(2+) ions per subunit.</text>
</comment>
<comment type="pathway">
    <text evidence="1">Amino-acid degradation; L-threonine degradation via oxydo-reductase pathway; glycine from L-threonine: step 1/2.</text>
</comment>
<comment type="subunit">
    <text evidence="1">Homotetramer.</text>
</comment>
<comment type="subcellular location">
    <subcellularLocation>
        <location evidence="1">Cytoplasm</location>
    </subcellularLocation>
</comment>
<comment type="similarity">
    <text evidence="1">Belongs to the zinc-containing alcohol dehydrogenase family.</text>
</comment>
<evidence type="ECO:0000255" key="1">
    <source>
        <dbReference type="HAMAP-Rule" id="MF_00627"/>
    </source>
</evidence>
<sequence length="343" mass="37657">MKIKALSKLKPEQGIWMTEVDKPEVGHNDILIKIKKTAICGTDVHIYNWDEWSQKTIPVPMVVGHEYVGEVVAIGQEVRGFEIGDRVSGEGHITCGHCRNCRGGRTHLCRNTIGVGVNREGAFAEYLVIPAFNAFKIPDEISDDLASIFDPFGNAVHTALSFDLVGEDVLITGAGPIGIMAAAVAKHVGARHVVITDVNEYRLELARKMGVTRAVNVAEEKLEDVMAELGMTEGFDVGLEMSGNPAAFNSMLTTMNHGGRIALLGIPPSDMGIDWNQVIFKGLVIKGIYGREMFETWYKMASLIQSGLDLSPIITHHYKIDDFQEGFDVMRSGMSGKVILDWE</sequence>
<name>TDH_VIBPA</name>
<proteinExistence type="inferred from homology"/>